<accession>B1IZ95</accession>
<sequence length="160" mass="18223">MKLQVLPLSQEAFSAYGDVIETQQRDFFHINNGLVERYHDLALVEILEQDRTLISINRAQPANLPLTIHELERHPLGTQAFIPMKGEVFVVVVALGDDKPDLSTLRAFITNGEQGVNYHRNVWHHPLFAWQRVTDFLTIDRGGSDNCDVESIPEQELCFA</sequence>
<organism>
    <name type="scientific">Escherichia coli (strain ATCC 8739 / DSM 1576 / NBRC 3972 / NCIMB 8545 / WDCM 00012 / Crooks)</name>
    <dbReference type="NCBI Taxonomy" id="481805"/>
    <lineage>
        <taxon>Bacteria</taxon>
        <taxon>Pseudomonadati</taxon>
        <taxon>Pseudomonadota</taxon>
        <taxon>Gammaproteobacteria</taxon>
        <taxon>Enterobacterales</taxon>
        <taxon>Enterobacteriaceae</taxon>
        <taxon>Escherichia</taxon>
    </lineage>
</organism>
<reference key="1">
    <citation type="submission" date="2008-02" db="EMBL/GenBank/DDBJ databases">
        <title>Complete sequence of Escherichia coli C str. ATCC 8739.</title>
        <authorList>
            <person name="Copeland A."/>
            <person name="Lucas S."/>
            <person name="Lapidus A."/>
            <person name="Glavina del Rio T."/>
            <person name="Dalin E."/>
            <person name="Tice H."/>
            <person name="Bruce D."/>
            <person name="Goodwin L."/>
            <person name="Pitluck S."/>
            <person name="Kiss H."/>
            <person name="Brettin T."/>
            <person name="Detter J.C."/>
            <person name="Han C."/>
            <person name="Kuske C.R."/>
            <person name="Schmutz J."/>
            <person name="Larimer F."/>
            <person name="Land M."/>
            <person name="Hauser L."/>
            <person name="Kyrpides N."/>
            <person name="Mikhailova N."/>
            <person name="Ingram L."/>
            <person name="Richardson P."/>
        </authorList>
    </citation>
    <scope>NUCLEOTIDE SEQUENCE [LARGE SCALE GENOMIC DNA]</scope>
    <source>
        <strain>ATCC 8739 / DSM 1576 / NBRC 3972 / NCIMB 8545 / WDCM 00012 / Crooks</strain>
    </source>
</reference>
<comment type="function">
    <text evidence="1">Catalyzes the catabolism of the allantoin degradation intermediate (S)-ureidoglycolate, generating urea and glyoxylate. Involved in the anaerobic utilization of allantoin as sole nitrogen source. Reinforces the induction of genes involved in the degradation of allantoin and glyoxylate by producing glyoxylate.</text>
</comment>
<comment type="catalytic activity">
    <reaction evidence="1">
        <text>(S)-ureidoglycolate = urea + glyoxylate</text>
        <dbReference type="Rhea" id="RHEA:11304"/>
        <dbReference type="ChEBI" id="CHEBI:16199"/>
        <dbReference type="ChEBI" id="CHEBI:36655"/>
        <dbReference type="ChEBI" id="CHEBI:57296"/>
        <dbReference type="EC" id="4.3.2.3"/>
    </reaction>
</comment>
<comment type="cofactor">
    <cofactor evidence="1">
        <name>Ni(2+)</name>
        <dbReference type="ChEBI" id="CHEBI:49786"/>
    </cofactor>
</comment>
<comment type="pathway">
    <text evidence="1">Nitrogen metabolism; (S)-allantoin degradation.</text>
</comment>
<comment type="subunit">
    <text evidence="1">Homodimer.</text>
</comment>
<comment type="similarity">
    <text evidence="1">Belongs to the ureidoglycolate lyase family.</text>
</comment>
<name>ALLA_ECOLC</name>
<gene>
    <name evidence="1" type="primary">allA</name>
    <name type="ordered locus">EcolC_3117</name>
</gene>
<evidence type="ECO:0000255" key="1">
    <source>
        <dbReference type="HAMAP-Rule" id="MF_00616"/>
    </source>
</evidence>
<keyword id="KW-0456">Lyase</keyword>
<keyword id="KW-0659">Purine metabolism</keyword>
<protein>
    <recommendedName>
        <fullName evidence="1">Ureidoglycolate lyase</fullName>
        <ecNumber evidence="1">4.3.2.3</ecNumber>
    </recommendedName>
    <alternativeName>
        <fullName evidence="1">Ureidoglycolatase</fullName>
    </alternativeName>
</protein>
<feature type="chain" id="PRO_1000082579" description="Ureidoglycolate lyase">
    <location>
        <begin position="1"/>
        <end position="160"/>
    </location>
</feature>
<dbReference type="EC" id="4.3.2.3" evidence="1"/>
<dbReference type="EMBL" id="CP000946">
    <property type="protein sequence ID" value="ACA78740.1"/>
    <property type="molecule type" value="Genomic_DNA"/>
</dbReference>
<dbReference type="RefSeq" id="WP_000776388.1">
    <property type="nucleotide sequence ID" value="NZ_MTFT01000020.1"/>
</dbReference>
<dbReference type="SMR" id="B1IZ95"/>
<dbReference type="GeneID" id="75202348"/>
<dbReference type="KEGG" id="ecl:EcolC_3117"/>
<dbReference type="HOGENOM" id="CLU_070848_1_1_6"/>
<dbReference type="UniPathway" id="UPA00395"/>
<dbReference type="GO" id="GO:0004848">
    <property type="term" value="F:ureidoglycolate hydrolase activity"/>
    <property type="evidence" value="ECO:0007669"/>
    <property type="project" value="InterPro"/>
</dbReference>
<dbReference type="GO" id="GO:0050385">
    <property type="term" value="F:ureidoglycolate lyase activity"/>
    <property type="evidence" value="ECO:0007669"/>
    <property type="project" value="UniProtKB-UniRule"/>
</dbReference>
<dbReference type="GO" id="GO:0000256">
    <property type="term" value="P:allantoin catabolic process"/>
    <property type="evidence" value="ECO:0007669"/>
    <property type="project" value="UniProtKB-UniRule"/>
</dbReference>
<dbReference type="GO" id="GO:0006145">
    <property type="term" value="P:purine nucleobase catabolic process"/>
    <property type="evidence" value="ECO:0007669"/>
    <property type="project" value="UniProtKB-UniRule"/>
</dbReference>
<dbReference type="CDD" id="cd20298">
    <property type="entry name" value="cupin_UAH"/>
    <property type="match status" value="1"/>
</dbReference>
<dbReference type="FunFam" id="2.60.120.480:FF:000001">
    <property type="entry name" value="Ureidoglycolate lyase"/>
    <property type="match status" value="1"/>
</dbReference>
<dbReference type="Gene3D" id="2.60.120.480">
    <property type="entry name" value="Ureidoglycolate hydrolase"/>
    <property type="match status" value="1"/>
</dbReference>
<dbReference type="HAMAP" id="MF_00616">
    <property type="entry name" value="Ureidogly_lyase"/>
    <property type="match status" value="1"/>
</dbReference>
<dbReference type="InterPro" id="IPR011051">
    <property type="entry name" value="RmlC_Cupin_sf"/>
</dbReference>
<dbReference type="InterPro" id="IPR047233">
    <property type="entry name" value="UAH_cupin"/>
</dbReference>
<dbReference type="InterPro" id="IPR007247">
    <property type="entry name" value="Ureidogly_lyase"/>
</dbReference>
<dbReference type="InterPro" id="IPR023525">
    <property type="entry name" value="Ureidogly_lyase_bac"/>
</dbReference>
<dbReference type="InterPro" id="IPR024060">
    <property type="entry name" value="Ureidoglycolate_lyase_dom_sf"/>
</dbReference>
<dbReference type="NCBIfam" id="NF002948">
    <property type="entry name" value="PRK03606.1-1"/>
    <property type="match status" value="1"/>
</dbReference>
<dbReference type="NCBIfam" id="NF009932">
    <property type="entry name" value="PRK13395.1"/>
    <property type="match status" value="1"/>
</dbReference>
<dbReference type="PANTHER" id="PTHR21221">
    <property type="entry name" value="UREIDOGLYCOLATE HYDROLASE"/>
    <property type="match status" value="1"/>
</dbReference>
<dbReference type="PANTHER" id="PTHR21221:SF1">
    <property type="entry name" value="UREIDOGLYCOLATE LYASE"/>
    <property type="match status" value="1"/>
</dbReference>
<dbReference type="Pfam" id="PF04115">
    <property type="entry name" value="Ureidogly_lyase"/>
    <property type="match status" value="1"/>
</dbReference>
<dbReference type="PIRSF" id="PIRSF017306">
    <property type="entry name" value="Ureidogly_hydro"/>
    <property type="match status" value="1"/>
</dbReference>
<dbReference type="SUPFAM" id="SSF51182">
    <property type="entry name" value="RmlC-like cupins"/>
    <property type="match status" value="1"/>
</dbReference>
<proteinExistence type="inferred from homology"/>